<organism>
    <name type="scientific">Francisella tularensis subsp. holarctica (strain LVS)</name>
    <dbReference type="NCBI Taxonomy" id="376619"/>
    <lineage>
        <taxon>Bacteria</taxon>
        <taxon>Pseudomonadati</taxon>
        <taxon>Pseudomonadota</taxon>
        <taxon>Gammaproteobacteria</taxon>
        <taxon>Thiotrichales</taxon>
        <taxon>Francisellaceae</taxon>
        <taxon>Francisella</taxon>
    </lineage>
</organism>
<evidence type="ECO:0000255" key="1">
    <source>
        <dbReference type="HAMAP-Rule" id="MF_00011"/>
    </source>
</evidence>
<reference key="1">
    <citation type="submission" date="2006-03" db="EMBL/GenBank/DDBJ databases">
        <title>Complete genome sequence of Francisella tularensis LVS (Live Vaccine Strain).</title>
        <authorList>
            <person name="Chain P."/>
            <person name="Larimer F."/>
            <person name="Land M."/>
            <person name="Stilwagen S."/>
            <person name="Larsson P."/>
            <person name="Bearden S."/>
            <person name="Chu M."/>
            <person name="Oyston P."/>
            <person name="Forsman M."/>
            <person name="Andersson S."/>
            <person name="Lindler L."/>
            <person name="Titball R."/>
            <person name="Garcia E."/>
        </authorList>
    </citation>
    <scope>NUCLEOTIDE SEQUENCE [LARGE SCALE GENOMIC DNA]</scope>
    <source>
        <strain>LVS</strain>
    </source>
</reference>
<keyword id="KW-0963">Cytoplasm</keyword>
<keyword id="KW-0342">GTP-binding</keyword>
<keyword id="KW-0436">Ligase</keyword>
<keyword id="KW-0460">Magnesium</keyword>
<keyword id="KW-0479">Metal-binding</keyword>
<keyword id="KW-0547">Nucleotide-binding</keyword>
<keyword id="KW-0658">Purine biosynthesis</keyword>
<keyword id="KW-1185">Reference proteome</keyword>
<feature type="chain" id="PRO_1000000824" description="Adenylosuccinate synthetase">
    <location>
        <begin position="1"/>
        <end position="428"/>
    </location>
</feature>
<feature type="active site" description="Proton acceptor" evidence="1">
    <location>
        <position position="13"/>
    </location>
</feature>
<feature type="active site" description="Proton donor" evidence="1">
    <location>
        <position position="41"/>
    </location>
</feature>
<feature type="binding site" evidence="1">
    <location>
        <begin position="12"/>
        <end position="18"/>
    </location>
    <ligand>
        <name>GTP</name>
        <dbReference type="ChEBI" id="CHEBI:37565"/>
    </ligand>
</feature>
<feature type="binding site" description="in other chain" evidence="1">
    <location>
        <begin position="13"/>
        <end position="16"/>
    </location>
    <ligand>
        <name>IMP</name>
        <dbReference type="ChEBI" id="CHEBI:58053"/>
        <note>ligand shared between dimeric partners</note>
    </ligand>
</feature>
<feature type="binding site" evidence="1">
    <location>
        <position position="13"/>
    </location>
    <ligand>
        <name>Mg(2+)</name>
        <dbReference type="ChEBI" id="CHEBI:18420"/>
    </ligand>
</feature>
<feature type="binding site" description="in other chain" evidence="1">
    <location>
        <begin position="38"/>
        <end position="41"/>
    </location>
    <ligand>
        <name>IMP</name>
        <dbReference type="ChEBI" id="CHEBI:58053"/>
        <note>ligand shared between dimeric partners</note>
    </ligand>
</feature>
<feature type="binding site" evidence="1">
    <location>
        <begin position="40"/>
        <end position="42"/>
    </location>
    <ligand>
        <name>GTP</name>
        <dbReference type="ChEBI" id="CHEBI:37565"/>
    </ligand>
</feature>
<feature type="binding site" evidence="1">
    <location>
        <position position="40"/>
    </location>
    <ligand>
        <name>Mg(2+)</name>
        <dbReference type="ChEBI" id="CHEBI:18420"/>
    </ligand>
</feature>
<feature type="binding site" description="in other chain" evidence="1">
    <location>
        <position position="129"/>
    </location>
    <ligand>
        <name>IMP</name>
        <dbReference type="ChEBI" id="CHEBI:58053"/>
        <note>ligand shared between dimeric partners</note>
    </ligand>
</feature>
<feature type="binding site" evidence="1">
    <location>
        <position position="143"/>
    </location>
    <ligand>
        <name>IMP</name>
        <dbReference type="ChEBI" id="CHEBI:58053"/>
        <note>ligand shared between dimeric partners</note>
    </ligand>
</feature>
<feature type="binding site" description="in other chain" evidence="1">
    <location>
        <position position="224"/>
    </location>
    <ligand>
        <name>IMP</name>
        <dbReference type="ChEBI" id="CHEBI:58053"/>
        <note>ligand shared between dimeric partners</note>
    </ligand>
</feature>
<feature type="binding site" description="in other chain" evidence="1">
    <location>
        <position position="239"/>
    </location>
    <ligand>
        <name>IMP</name>
        <dbReference type="ChEBI" id="CHEBI:58053"/>
        <note>ligand shared between dimeric partners</note>
    </ligand>
</feature>
<feature type="binding site" evidence="1">
    <location>
        <begin position="299"/>
        <end position="305"/>
    </location>
    <ligand>
        <name>substrate</name>
    </ligand>
</feature>
<feature type="binding site" description="in other chain" evidence="1">
    <location>
        <position position="303"/>
    </location>
    <ligand>
        <name>IMP</name>
        <dbReference type="ChEBI" id="CHEBI:58053"/>
        <note>ligand shared between dimeric partners</note>
    </ligand>
</feature>
<feature type="binding site" evidence="1">
    <location>
        <position position="305"/>
    </location>
    <ligand>
        <name>GTP</name>
        <dbReference type="ChEBI" id="CHEBI:37565"/>
    </ligand>
</feature>
<feature type="binding site" evidence="1">
    <location>
        <begin position="331"/>
        <end position="333"/>
    </location>
    <ligand>
        <name>GTP</name>
        <dbReference type="ChEBI" id="CHEBI:37565"/>
    </ligand>
</feature>
<feature type="binding site" evidence="1">
    <location>
        <begin position="410"/>
        <end position="412"/>
    </location>
    <ligand>
        <name>GTP</name>
        <dbReference type="ChEBI" id="CHEBI:37565"/>
    </ligand>
</feature>
<comment type="function">
    <text evidence="1">Plays an important role in the de novo pathway of purine nucleotide biosynthesis. Catalyzes the first committed step in the biosynthesis of AMP from IMP.</text>
</comment>
<comment type="catalytic activity">
    <reaction evidence="1">
        <text>IMP + L-aspartate + GTP = N(6)-(1,2-dicarboxyethyl)-AMP + GDP + phosphate + 2 H(+)</text>
        <dbReference type="Rhea" id="RHEA:15753"/>
        <dbReference type="ChEBI" id="CHEBI:15378"/>
        <dbReference type="ChEBI" id="CHEBI:29991"/>
        <dbReference type="ChEBI" id="CHEBI:37565"/>
        <dbReference type="ChEBI" id="CHEBI:43474"/>
        <dbReference type="ChEBI" id="CHEBI:57567"/>
        <dbReference type="ChEBI" id="CHEBI:58053"/>
        <dbReference type="ChEBI" id="CHEBI:58189"/>
        <dbReference type="EC" id="6.3.4.4"/>
    </reaction>
</comment>
<comment type="cofactor">
    <cofactor evidence="1">
        <name>Mg(2+)</name>
        <dbReference type="ChEBI" id="CHEBI:18420"/>
    </cofactor>
    <text evidence="1">Binds 1 Mg(2+) ion per subunit.</text>
</comment>
<comment type="pathway">
    <text evidence="1">Purine metabolism; AMP biosynthesis via de novo pathway; AMP from IMP: step 1/2.</text>
</comment>
<comment type="subunit">
    <text evidence="1">Homodimer.</text>
</comment>
<comment type="subcellular location">
    <subcellularLocation>
        <location evidence="1">Cytoplasm</location>
    </subcellularLocation>
</comment>
<comment type="similarity">
    <text evidence="1">Belongs to the adenylosuccinate synthetase family.</text>
</comment>
<sequence>MSNIVIVGAQWGDEGKGKIADTLAEKADLVVRYQGGNNAGHTLVVNGKKTFLHLIPSGVLHQHTKCVIGHGVVLDPVALDEEITRLQAKGIAISAENLFVSESCTIITSYHKLLDAVRESNTSEKIGTTGKGIGPAYEDKVSRKGIKFKHLFDKDLLRSRLAISLAEKETLFRDLYKVEYPTLEQEFDKLFALGQKLKQYAADTFSIIDQAIAAGKNVVYEGAQGVLLDVDYGTYPFVTSSNTSVAGVYSGATTAGHGLDHVIGITKAYTTRVGEGPFPTELFDDVGKFIQHKGGEIGVTTGRIRRCGWLDLPLLKYSAKCSNLTSIALTKVDVLSDMDTLKVCIGYKYEGKEIYCAYPGIDLYKVEPILVEMEPFSIDETVTKDNMPAALKTYLKTIENHVGIPISSLAYGPSREQILFFEDYFKKG</sequence>
<accession>Q2A167</accession>
<name>PURA_FRATH</name>
<proteinExistence type="inferred from homology"/>
<gene>
    <name evidence="1" type="primary">purA</name>
    <name type="ordered locus">FTL_1930</name>
</gene>
<dbReference type="EC" id="6.3.4.4" evidence="1"/>
<dbReference type="EMBL" id="AM233362">
    <property type="protein sequence ID" value="CAJ80369.1"/>
    <property type="molecule type" value="Genomic_DNA"/>
</dbReference>
<dbReference type="RefSeq" id="WP_003013911.1">
    <property type="nucleotide sequence ID" value="NZ_CP009694.1"/>
</dbReference>
<dbReference type="SMR" id="Q2A167"/>
<dbReference type="KEGG" id="ftl:FTL_1930"/>
<dbReference type="UniPathway" id="UPA00075">
    <property type="reaction ID" value="UER00335"/>
</dbReference>
<dbReference type="Proteomes" id="UP000001944">
    <property type="component" value="Chromosome"/>
</dbReference>
<dbReference type="GO" id="GO:0005737">
    <property type="term" value="C:cytoplasm"/>
    <property type="evidence" value="ECO:0007669"/>
    <property type="project" value="UniProtKB-SubCell"/>
</dbReference>
<dbReference type="GO" id="GO:0004019">
    <property type="term" value="F:adenylosuccinate synthase activity"/>
    <property type="evidence" value="ECO:0007669"/>
    <property type="project" value="UniProtKB-UniRule"/>
</dbReference>
<dbReference type="GO" id="GO:0005525">
    <property type="term" value="F:GTP binding"/>
    <property type="evidence" value="ECO:0007669"/>
    <property type="project" value="UniProtKB-UniRule"/>
</dbReference>
<dbReference type="GO" id="GO:0000287">
    <property type="term" value="F:magnesium ion binding"/>
    <property type="evidence" value="ECO:0007669"/>
    <property type="project" value="UniProtKB-UniRule"/>
</dbReference>
<dbReference type="GO" id="GO:0044208">
    <property type="term" value="P:'de novo' AMP biosynthetic process"/>
    <property type="evidence" value="ECO:0007669"/>
    <property type="project" value="UniProtKB-UniRule"/>
</dbReference>
<dbReference type="GO" id="GO:0046040">
    <property type="term" value="P:IMP metabolic process"/>
    <property type="evidence" value="ECO:0007669"/>
    <property type="project" value="TreeGrafter"/>
</dbReference>
<dbReference type="CDD" id="cd03108">
    <property type="entry name" value="AdSS"/>
    <property type="match status" value="1"/>
</dbReference>
<dbReference type="FunFam" id="1.10.300.10:FF:000001">
    <property type="entry name" value="Adenylosuccinate synthetase"/>
    <property type="match status" value="1"/>
</dbReference>
<dbReference type="FunFam" id="3.90.170.10:FF:000001">
    <property type="entry name" value="Adenylosuccinate synthetase"/>
    <property type="match status" value="1"/>
</dbReference>
<dbReference type="Gene3D" id="3.40.440.10">
    <property type="entry name" value="Adenylosuccinate Synthetase, subunit A, domain 1"/>
    <property type="match status" value="1"/>
</dbReference>
<dbReference type="Gene3D" id="1.10.300.10">
    <property type="entry name" value="Adenylosuccinate Synthetase, subunit A, domain 2"/>
    <property type="match status" value="1"/>
</dbReference>
<dbReference type="Gene3D" id="3.90.170.10">
    <property type="entry name" value="Adenylosuccinate Synthetase, subunit A, domain 3"/>
    <property type="match status" value="1"/>
</dbReference>
<dbReference type="HAMAP" id="MF_00011">
    <property type="entry name" value="Adenylosucc_synth"/>
    <property type="match status" value="1"/>
</dbReference>
<dbReference type="InterPro" id="IPR018220">
    <property type="entry name" value="Adenylosuccin_syn_GTP-bd"/>
</dbReference>
<dbReference type="InterPro" id="IPR033128">
    <property type="entry name" value="Adenylosuccin_syn_Lys_AS"/>
</dbReference>
<dbReference type="InterPro" id="IPR042109">
    <property type="entry name" value="Adenylosuccinate_synth_dom1"/>
</dbReference>
<dbReference type="InterPro" id="IPR042110">
    <property type="entry name" value="Adenylosuccinate_synth_dom2"/>
</dbReference>
<dbReference type="InterPro" id="IPR042111">
    <property type="entry name" value="Adenylosuccinate_synth_dom3"/>
</dbReference>
<dbReference type="InterPro" id="IPR001114">
    <property type="entry name" value="Adenylosuccinate_synthetase"/>
</dbReference>
<dbReference type="InterPro" id="IPR027417">
    <property type="entry name" value="P-loop_NTPase"/>
</dbReference>
<dbReference type="NCBIfam" id="NF002223">
    <property type="entry name" value="PRK01117.1"/>
    <property type="match status" value="1"/>
</dbReference>
<dbReference type="NCBIfam" id="TIGR00184">
    <property type="entry name" value="purA"/>
    <property type="match status" value="1"/>
</dbReference>
<dbReference type="PANTHER" id="PTHR11846">
    <property type="entry name" value="ADENYLOSUCCINATE SYNTHETASE"/>
    <property type="match status" value="1"/>
</dbReference>
<dbReference type="PANTHER" id="PTHR11846:SF0">
    <property type="entry name" value="ADENYLOSUCCINATE SYNTHETASE"/>
    <property type="match status" value="1"/>
</dbReference>
<dbReference type="Pfam" id="PF00709">
    <property type="entry name" value="Adenylsucc_synt"/>
    <property type="match status" value="1"/>
</dbReference>
<dbReference type="SMART" id="SM00788">
    <property type="entry name" value="Adenylsucc_synt"/>
    <property type="match status" value="1"/>
</dbReference>
<dbReference type="SUPFAM" id="SSF52540">
    <property type="entry name" value="P-loop containing nucleoside triphosphate hydrolases"/>
    <property type="match status" value="1"/>
</dbReference>
<dbReference type="PROSITE" id="PS01266">
    <property type="entry name" value="ADENYLOSUCCIN_SYN_1"/>
    <property type="match status" value="1"/>
</dbReference>
<dbReference type="PROSITE" id="PS00513">
    <property type="entry name" value="ADENYLOSUCCIN_SYN_2"/>
    <property type="match status" value="1"/>
</dbReference>
<protein>
    <recommendedName>
        <fullName evidence="1">Adenylosuccinate synthetase</fullName>
        <shortName evidence="1">AMPSase</shortName>
        <shortName evidence="1">AdSS</shortName>
        <ecNumber evidence="1">6.3.4.4</ecNumber>
    </recommendedName>
    <alternativeName>
        <fullName evidence="1">IMP--aspartate ligase</fullName>
    </alternativeName>
</protein>